<gene>
    <name type="primary">LST4</name>
    <name type="ordered locus">YKL176C</name>
    <name type="ORF">YKL642</name>
</gene>
<evidence type="ECO:0000255" key="1">
    <source>
        <dbReference type="PROSITE-ProRule" id="PRU01180"/>
    </source>
</evidence>
<evidence type="ECO:0000256" key="2">
    <source>
        <dbReference type="SAM" id="MobiDB-lite"/>
    </source>
</evidence>
<evidence type="ECO:0000269" key="3">
    <source>
    </source>
</evidence>
<evidence type="ECO:0000269" key="4">
    <source>
    </source>
</evidence>
<evidence type="ECO:0000269" key="5">
    <source>
    </source>
</evidence>
<evidence type="ECO:0000269" key="6">
    <source>
    </source>
</evidence>
<evidence type="ECO:0000305" key="7"/>
<evidence type="ECO:0007744" key="8">
    <source>
    </source>
</evidence>
<organism>
    <name type="scientific">Saccharomyces cerevisiae (strain ATCC 204508 / S288c)</name>
    <name type="common">Baker's yeast</name>
    <dbReference type="NCBI Taxonomy" id="559292"/>
    <lineage>
        <taxon>Eukaryota</taxon>
        <taxon>Fungi</taxon>
        <taxon>Dikarya</taxon>
        <taxon>Ascomycota</taxon>
        <taxon>Saccharomycotina</taxon>
        <taxon>Saccharomycetes</taxon>
        <taxon>Saccharomycetales</taxon>
        <taxon>Saccharomycetaceae</taxon>
        <taxon>Saccharomyces</taxon>
    </lineage>
</organism>
<comment type="function">
    <text evidence="3 4 6">Involved in extracellular amino acid uptake. Required for the trafficking of the GAP1 nitrogen-regulated general amino acid permease from the Golgi to the plasma membrane.</text>
</comment>
<comment type="disruption phenotype">
    <text evidence="5">Sensitive to high hydrostatic pressure (mechanical stress).</text>
</comment>
<comment type="similarity">
    <text evidence="7">Belongs to the LST4 family.</text>
</comment>
<accession>P34239</accession>
<accession>D6VX24</accession>
<keyword id="KW-0029">Amino-acid transport</keyword>
<keyword id="KW-0597">Phosphoprotein</keyword>
<keyword id="KW-0653">Protein transport</keyword>
<keyword id="KW-1185">Reference proteome</keyword>
<keyword id="KW-0813">Transport</keyword>
<protein>
    <recommendedName>
        <fullName>Protein LST4</fullName>
    </recommendedName>
    <alternativeName>
        <fullName>Lethal with SEC30 protein 4</fullName>
    </alternativeName>
</protein>
<feature type="chain" id="PRO_0000203139" description="Protein LST4">
    <location>
        <begin position="1"/>
        <end position="828"/>
    </location>
</feature>
<feature type="domain" description="uDENN FNIP1/2-type" evidence="1">
    <location>
        <begin position="114"/>
        <end position="302"/>
    </location>
</feature>
<feature type="domain" description="cDENN FNIP1/2-type" evidence="1">
    <location>
        <begin position="310"/>
        <end position="712"/>
    </location>
</feature>
<feature type="domain" description="dDENN FNIP1/2-type" evidence="1">
    <location>
        <begin position="718"/>
        <end position="825"/>
    </location>
</feature>
<feature type="region of interest" description="Disordered" evidence="2">
    <location>
        <begin position="1"/>
        <end position="25"/>
    </location>
</feature>
<feature type="region of interest" description="Disordered" evidence="2">
    <location>
        <begin position="392"/>
        <end position="411"/>
    </location>
</feature>
<feature type="region of interest" description="Disordered" evidence="2">
    <location>
        <begin position="423"/>
        <end position="444"/>
    </location>
</feature>
<feature type="region of interest" description="Disordered" evidence="2">
    <location>
        <begin position="538"/>
        <end position="569"/>
    </location>
</feature>
<feature type="compositionally biased region" description="Polar residues" evidence="2">
    <location>
        <begin position="392"/>
        <end position="405"/>
    </location>
</feature>
<feature type="compositionally biased region" description="Low complexity" evidence="2">
    <location>
        <begin position="543"/>
        <end position="562"/>
    </location>
</feature>
<feature type="modified residue" description="Phosphoserine" evidence="8">
    <location>
        <position position="401"/>
    </location>
</feature>
<sequence>MLGNLLRNKTSSSGFEKSSEHSDFSSVVPNVPVYCKAASTGTTKTAAGALLDTAVNVEKPSEMLSTTSPPILDHISDDLKLKLFGSRDIPYSRPIDTLQNNGGLGTDKITSINEKTYAFRILIIEEAGQMACRNNYRDIFDYTTSKISNSMEQIRPSELKEYIFGSPVRSSDLTQCDKIRTIPNSDLVLITRIFYYTHQYNRIAISLCIPRILLPVVAESWSSISSWLTQTQKMLIGFLTKNRIMQENTGNYSNNSVIKLSNIDIRTHYPKEIEIMVQTLQKRVIPGLRSMSEIPRLFLYPETFKEFVHVWFKSIFNWIEIKDGPKLGFLPLLMAMIISDYRHTIRELKTSKIVILSGNMVVANKLLFILSALLEPKYKGQITIRRENIRSDSSAVSRNKSNNNFVDKPETELSTLTSTDNLLSRTENNSNHNYNNSNVSSNSIGSPNFHSLRKGWQIPNRRNSNTSVSVSSSESLAEVIQPSSFKSGSSSLHYLSSSISSQPGSYGSWFNKRPTISQFFQPSPSLKHNESWERLQTTAGNMQRTSSSSSLQQATSRLSLTTPQQSPSISEYDEYPWMGTPGSPNVGDVSHAPPLVKNISYKFPLKNVELKRDCQRISQDDLLDEAFERICQPSLADLNSTYEIFPGNSSYADILTTDSDIDDGLMNKPLELLPKYTMYLTHFNNFFQLQACPAGQESESRITNSMKIDLLKADYTRSLLVSLRSRDIRDVALKREFTGNNNNNSNQNIYDENFVGKRKYVLKQKTRKIFSCGKIGKLSTSLENCVNFVENSIKSAMMLYDDNGIDSELRDSEALRIFSSLVHYCNAG</sequence>
<name>LST4_YEAST</name>
<proteinExistence type="evidence at protein level"/>
<dbReference type="EMBL" id="X74151">
    <property type="protein sequence ID" value="CAA52262.1"/>
    <property type="molecule type" value="Genomic_DNA"/>
</dbReference>
<dbReference type="EMBL" id="Z26878">
    <property type="protein sequence ID" value="CAA81509.1"/>
    <property type="molecule type" value="Genomic_DNA"/>
</dbReference>
<dbReference type="EMBL" id="Z28176">
    <property type="protein sequence ID" value="CAA82018.1"/>
    <property type="molecule type" value="Genomic_DNA"/>
</dbReference>
<dbReference type="EMBL" id="BK006944">
    <property type="protein sequence ID" value="DAA08990.1"/>
    <property type="molecule type" value="Genomic_DNA"/>
</dbReference>
<dbReference type="PIR" id="S34695">
    <property type="entry name" value="S34695"/>
</dbReference>
<dbReference type="RefSeq" id="NP_012745.1">
    <property type="nucleotide sequence ID" value="NM_001179742.1"/>
</dbReference>
<dbReference type="SMR" id="P34239"/>
<dbReference type="BioGRID" id="33962">
    <property type="interactions" value="299"/>
</dbReference>
<dbReference type="DIP" id="DIP-2882N"/>
<dbReference type="FunCoup" id="P34239">
    <property type="interactions" value="74"/>
</dbReference>
<dbReference type="IntAct" id="P34239">
    <property type="interactions" value="5"/>
</dbReference>
<dbReference type="MINT" id="P34239"/>
<dbReference type="STRING" id="4932.YKL176C"/>
<dbReference type="GlyGen" id="P34239">
    <property type="glycosylation" value="2 sites, 1 O-linked glycan (1 site)"/>
</dbReference>
<dbReference type="iPTMnet" id="P34239"/>
<dbReference type="PaxDb" id="4932-YKL176C"/>
<dbReference type="PeptideAtlas" id="P34239"/>
<dbReference type="EnsemblFungi" id="YKL176C_mRNA">
    <property type="protein sequence ID" value="YKL176C"/>
    <property type="gene ID" value="YKL176C"/>
</dbReference>
<dbReference type="GeneID" id="853678"/>
<dbReference type="KEGG" id="sce:YKL176C"/>
<dbReference type="AGR" id="SGD:S000001659"/>
<dbReference type="SGD" id="S000001659">
    <property type="gene designation" value="LST4"/>
</dbReference>
<dbReference type="VEuPathDB" id="FungiDB:YKL176C"/>
<dbReference type="eggNOG" id="ENOG502QPJF">
    <property type="taxonomic scope" value="Eukaryota"/>
</dbReference>
<dbReference type="HOGENOM" id="CLU_010482_0_0_1"/>
<dbReference type="InParanoid" id="P34239"/>
<dbReference type="OMA" id="SEYDEYP"/>
<dbReference type="OrthoDB" id="4063558at2759"/>
<dbReference type="BioCyc" id="YEAST:G3O-31943-MONOMER"/>
<dbReference type="BioGRID-ORCS" id="853678">
    <property type="hits" value="0 hits in 10 CRISPR screens"/>
</dbReference>
<dbReference type="PRO" id="PR:P34239"/>
<dbReference type="Proteomes" id="UP000002311">
    <property type="component" value="Chromosome XI"/>
</dbReference>
<dbReference type="RNAct" id="P34239">
    <property type="molecule type" value="protein"/>
</dbReference>
<dbReference type="GO" id="GO:0005737">
    <property type="term" value="C:cytoplasm"/>
    <property type="evidence" value="ECO:0000314"/>
    <property type="project" value="SGD"/>
</dbReference>
<dbReference type="GO" id="GO:0005829">
    <property type="term" value="C:cytosol"/>
    <property type="evidence" value="ECO:0007005"/>
    <property type="project" value="SGD"/>
</dbReference>
<dbReference type="GO" id="GO:1990877">
    <property type="term" value="C:FNIP-folliculin RagC/D GAP"/>
    <property type="evidence" value="ECO:0000314"/>
    <property type="project" value="SGD"/>
</dbReference>
<dbReference type="GO" id="GO:0005774">
    <property type="term" value="C:vacuolar membrane"/>
    <property type="evidence" value="ECO:0000314"/>
    <property type="project" value="SGD"/>
</dbReference>
<dbReference type="GO" id="GO:0006865">
    <property type="term" value="P:amino acid transport"/>
    <property type="evidence" value="ECO:0007669"/>
    <property type="project" value="UniProtKB-KW"/>
</dbReference>
<dbReference type="GO" id="GO:0071230">
    <property type="term" value="P:cellular response to amino acid stimulus"/>
    <property type="evidence" value="ECO:0000315"/>
    <property type="project" value="SGD"/>
</dbReference>
<dbReference type="GO" id="GO:1904263">
    <property type="term" value="P:positive regulation of TORC1 signaling"/>
    <property type="evidence" value="ECO:0000315"/>
    <property type="project" value="SGD"/>
</dbReference>
<dbReference type="GO" id="GO:0015031">
    <property type="term" value="P:protein transport"/>
    <property type="evidence" value="ECO:0007669"/>
    <property type="project" value="UniProtKB-KW"/>
</dbReference>
<dbReference type="InterPro" id="IPR037545">
    <property type="entry name" value="DENN_FNIP1/2"/>
</dbReference>
<dbReference type="InterPro" id="IPR041153">
    <property type="entry name" value="LST4_longin"/>
</dbReference>
<dbReference type="PANTHER" id="PTHR16148:SF14">
    <property type="entry name" value="MYND-TYPE DOMAIN-CONTAINING PROTEIN"/>
    <property type="match status" value="1"/>
</dbReference>
<dbReference type="PANTHER" id="PTHR16148">
    <property type="entry name" value="NF-KAPPA-B-REPRESSING FACTOR-RELATED"/>
    <property type="match status" value="1"/>
</dbReference>
<dbReference type="Pfam" id="PF18639">
    <property type="entry name" value="Longin_2"/>
    <property type="match status" value="1"/>
</dbReference>
<dbReference type="PROSITE" id="PS51836">
    <property type="entry name" value="DENN_FNIP12"/>
    <property type="match status" value="1"/>
</dbReference>
<reference key="1">
    <citation type="journal article" date="1993" name="Yeast">
        <title>Sequencing and analysis of 51.6 kilobases on the left arm of chromosome XI from Saccharomyces cerevisiae reveals 23 open reading frames including the FAS1 gene.</title>
        <authorList>
            <person name="Wiemann S."/>
            <person name="Voss H."/>
            <person name="Schwager C."/>
            <person name="Rupp T."/>
            <person name="Stegemann J."/>
            <person name="Zimmermann J."/>
            <person name="Grothues D."/>
            <person name="Sensen C."/>
            <person name="Erfle H."/>
            <person name="Hewitt N."/>
            <person name="Banrevi A."/>
            <person name="Ansorge W."/>
        </authorList>
    </citation>
    <scope>NUCLEOTIDE SEQUENCE [GENOMIC DNA]</scope>
</reference>
<reference key="2">
    <citation type="journal article" date="1994" name="Nature">
        <title>Complete DNA sequence of yeast chromosome XI.</title>
        <authorList>
            <person name="Dujon B."/>
            <person name="Alexandraki D."/>
            <person name="Andre B."/>
            <person name="Ansorge W."/>
            <person name="Baladron V."/>
            <person name="Ballesta J.P.G."/>
            <person name="Banrevi A."/>
            <person name="Bolle P.-A."/>
            <person name="Bolotin-Fukuhara M."/>
            <person name="Bossier P."/>
            <person name="Bou G."/>
            <person name="Boyer J."/>
            <person name="Buitrago M.J."/>
            <person name="Cheret G."/>
            <person name="Colleaux L."/>
            <person name="Daignan-Fornier B."/>
            <person name="del Rey F."/>
            <person name="Dion C."/>
            <person name="Domdey H."/>
            <person name="Duesterhoeft A."/>
            <person name="Duesterhus S."/>
            <person name="Entian K.-D."/>
            <person name="Erfle H."/>
            <person name="Esteban P.F."/>
            <person name="Feldmann H."/>
            <person name="Fernandes L."/>
            <person name="Fobo G.M."/>
            <person name="Fritz C."/>
            <person name="Fukuhara H."/>
            <person name="Gabel C."/>
            <person name="Gaillon L."/>
            <person name="Garcia-Cantalejo J.M."/>
            <person name="Garcia-Ramirez J.J."/>
            <person name="Gent M.E."/>
            <person name="Ghazvini M."/>
            <person name="Goffeau A."/>
            <person name="Gonzalez A."/>
            <person name="Grothues D."/>
            <person name="Guerreiro P."/>
            <person name="Hegemann J.H."/>
            <person name="Hewitt N."/>
            <person name="Hilger F."/>
            <person name="Hollenberg C.P."/>
            <person name="Horaitis O."/>
            <person name="Indge K.J."/>
            <person name="Jacquier A."/>
            <person name="James C.M."/>
            <person name="Jauniaux J.-C."/>
            <person name="Jimenez A."/>
            <person name="Keuchel H."/>
            <person name="Kirchrath L."/>
            <person name="Kleine K."/>
            <person name="Koetter P."/>
            <person name="Legrain P."/>
            <person name="Liebl S."/>
            <person name="Louis E.J."/>
            <person name="Maia e Silva A."/>
            <person name="Marck C."/>
            <person name="Monnier A.-L."/>
            <person name="Moestl D."/>
            <person name="Mueller S."/>
            <person name="Obermaier B."/>
            <person name="Oliver S.G."/>
            <person name="Pallier C."/>
            <person name="Pascolo S."/>
            <person name="Pfeiffer F."/>
            <person name="Philippsen P."/>
            <person name="Planta R.J."/>
            <person name="Pohl F.M."/>
            <person name="Pohl T.M."/>
            <person name="Poehlmann R."/>
            <person name="Portetelle D."/>
            <person name="Purnelle B."/>
            <person name="Puzos V."/>
            <person name="Ramezani Rad M."/>
            <person name="Rasmussen S.W."/>
            <person name="Remacha M.A."/>
            <person name="Revuelta J.L."/>
            <person name="Richard G.-F."/>
            <person name="Rieger M."/>
            <person name="Rodrigues-Pousada C."/>
            <person name="Rose M."/>
            <person name="Rupp T."/>
            <person name="Santos M.A."/>
            <person name="Schwager C."/>
            <person name="Sensen C."/>
            <person name="Skala J."/>
            <person name="Soares H."/>
            <person name="Sor F."/>
            <person name="Stegemann J."/>
            <person name="Tettelin H."/>
            <person name="Thierry A."/>
            <person name="Tzermia M."/>
            <person name="Urrestarazu L.A."/>
            <person name="van Dyck L."/>
            <person name="van Vliet-Reedijk J.C."/>
            <person name="Valens M."/>
            <person name="Vandenbol M."/>
            <person name="Vilela C."/>
            <person name="Vissers S."/>
            <person name="von Wettstein D."/>
            <person name="Voss H."/>
            <person name="Wiemann S."/>
            <person name="Xu G."/>
            <person name="Zimmermann J."/>
            <person name="Haasemann M."/>
            <person name="Becker I."/>
            <person name="Mewes H.-W."/>
        </authorList>
    </citation>
    <scope>NUCLEOTIDE SEQUENCE [LARGE SCALE GENOMIC DNA]</scope>
    <source>
        <strain>ATCC 204508 / S288c</strain>
    </source>
</reference>
<reference key="3">
    <citation type="journal article" date="2014" name="G3 (Bethesda)">
        <title>The reference genome sequence of Saccharomyces cerevisiae: Then and now.</title>
        <authorList>
            <person name="Engel S.R."/>
            <person name="Dietrich F.S."/>
            <person name="Fisk D.G."/>
            <person name="Binkley G."/>
            <person name="Balakrishnan R."/>
            <person name="Costanzo M.C."/>
            <person name="Dwight S.S."/>
            <person name="Hitz B.C."/>
            <person name="Karra K."/>
            <person name="Nash R.S."/>
            <person name="Weng S."/>
            <person name="Wong E.D."/>
            <person name="Lloyd P."/>
            <person name="Skrzypek M.S."/>
            <person name="Miyasato S.R."/>
            <person name="Simison M."/>
            <person name="Cherry J.M."/>
        </authorList>
    </citation>
    <scope>GENOME REANNOTATION</scope>
    <source>
        <strain>ATCC 204508 / S288c</strain>
    </source>
</reference>
<reference key="4">
    <citation type="journal article" date="1994" name="Yeast">
        <title>Sequencing and analysis of a 20.5 kb DNA segment located on the left arm of yeast chromosome XI.</title>
        <authorList>
            <person name="Vandenbol M."/>
            <person name="Bolle P.-A."/>
            <person name="Dion C."/>
            <person name="Portetelle D."/>
            <person name="Hilger F."/>
        </authorList>
    </citation>
    <scope>NUCLEOTIDE SEQUENCE [GENOMIC DNA] OF 1-306</scope>
    <source>
        <strain>ATCC 204508 / S288c</strain>
    </source>
</reference>
<reference key="5">
    <citation type="journal article" date="1997" name="Genetics">
        <title>Control of amino acid permease sorting in the late secretory pathway of Saccharomyces cerevisiae by SEC13, LST4, LST7 and LST8.</title>
        <authorList>
            <person name="Roberg K.J."/>
            <person name="Bickel S."/>
            <person name="Rowley N."/>
            <person name="Kaiser C.A."/>
        </authorList>
    </citation>
    <scope>FUNCTION</scope>
</reference>
<reference key="6">
    <citation type="journal article" date="2001" name="J. Cell Biol.">
        <title>Components of a ubiquitin ligase complex specify polyubiquitination and intracellular trafficking of the general amino acid permease.</title>
        <authorList>
            <person name="Helliwell S.B."/>
            <person name="Losko S."/>
            <person name="Kaiser C.A."/>
        </authorList>
    </citation>
    <scope>FUNCTION</scope>
</reference>
<reference key="7">
    <citation type="journal article" date="2006" name="Mol. Biol. Cell">
        <title>Amino acids regulate retrieval of the yeast general amino acid permease from the vacuolar targeting pathway.</title>
        <authorList>
            <person name="Rubio-Texeira M."/>
            <person name="Kaiser C.A."/>
        </authorList>
    </citation>
    <scope>FUNCTION</scope>
</reference>
<reference key="8">
    <citation type="journal article" date="2008" name="Mol. Cell. Proteomics">
        <title>A multidimensional chromatography technology for in-depth phosphoproteome analysis.</title>
        <authorList>
            <person name="Albuquerque C.P."/>
            <person name="Smolka M.B."/>
            <person name="Payne S.H."/>
            <person name="Bafna V."/>
            <person name="Eng J."/>
            <person name="Zhou H."/>
        </authorList>
    </citation>
    <scope>IDENTIFICATION BY MASS SPECTROMETRY [LARGE SCALE ANALYSIS]</scope>
</reference>
<reference key="9">
    <citation type="journal article" date="2009" name="Science">
        <title>Global analysis of Cdk1 substrate phosphorylation sites provides insights into evolution.</title>
        <authorList>
            <person name="Holt L.J."/>
            <person name="Tuch B.B."/>
            <person name="Villen J."/>
            <person name="Johnson A.D."/>
            <person name="Gygi S.P."/>
            <person name="Morgan D.O."/>
        </authorList>
    </citation>
    <scope>PHOSPHORYLATION [LARGE SCALE ANALYSIS] AT SER-401</scope>
    <scope>IDENTIFICATION BY MASS SPECTROMETRY [LARGE SCALE ANALYSIS]</scope>
</reference>
<reference key="10">
    <citation type="journal article" date="2020" name="J. Cell Sci.">
        <title>Amino acid homeostatic control by TORC1 in Saccharomyces cerevisiae under high hydrostatic pressure.</title>
        <authorList>
            <person name="Uemura S."/>
            <person name="Mochizuki T."/>
            <person name="Amemiya K."/>
            <person name="Kurosaka G."/>
            <person name="Yazawa M."/>
            <person name="Nakamoto K."/>
            <person name="Ishikawa Y."/>
            <person name="Izawa S."/>
            <person name="Abe F."/>
        </authorList>
    </citation>
    <scope>DISRUPTION PHENOTYPE</scope>
</reference>